<proteinExistence type="inferred from homology"/>
<dbReference type="EC" id="1.17.1.8" evidence="1"/>
<dbReference type="EMBL" id="AE016958">
    <property type="protein sequence ID" value="AAS05195.1"/>
    <property type="molecule type" value="Genomic_DNA"/>
</dbReference>
<dbReference type="RefSeq" id="WP_003875178.1">
    <property type="nucleotide sequence ID" value="NZ_CP106873.1"/>
</dbReference>
<dbReference type="SMR" id="Q73VY3"/>
<dbReference type="STRING" id="262316.MAP_2878c"/>
<dbReference type="KEGG" id="mpa:MAP_2878c"/>
<dbReference type="eggNOG" id="COG0289">
    <property type="taxonomic scope" value="Bacteria"/>
</dbReference>
<dbReference type="HOGENOM" id="CLU_047479_0_1_11"/>
<dbReference type="UniPathway" id="UPA00034">
    <property type="reaction ID" value="UER00018"/>
</dbReference>
<dbReference type="Proteomes" id="UP000000580">
    <property type="component" value="Chromosome"/>
</dbReference>
<dbReference type="GO" id="GO:0005829">
    <property type="term" value="C:cytosol"/>
    <property type="evidence" value="ECO:0007669"/>
    <property type="project" value="TreeGrafter"/>
</dbReference>
<dbReference type="GO" id="GO:0008839">
    <property type="term" value="F:4-hydroxy-tetrahydrodipicolinate reductase"/>
    <property type="evidence" value="ECO:0007669"/>
    <property type="project" value="UniProtKB-EC"/>
</dbReference>
<dbReference type="GO" id="GO:0051287">
    <property type="term" value="F:NAD binding"/>
    <property type="evidence" value="ECO:0007669"/>
    <property type="project" value="UniProtKB-UniRule"/>
</dbReference>
<dbReference type="GO" id="GO:0050661">
    <property type="term" value="F:NADP binding"/>
    <property type="evidence" value="ECO:0007669"/>
    <property type="project" value="UniProtKB-UniRule"/>
</dbReference>
<dbReference type="GO" id="GO:0016726">
    <property type="term" value="F:oxidoreductase activity, acting on CH or CH2 groups, NAD or NADP as acceptor"/>
    <property type="evidence" value="ECO:0007669"/>
    <property type="project" value="UniProtKB-UniRule"/>
</dbReference>
<dbReference type="GO" id="GO:0019877">
    <property type="term" value="P:diaminopimelate biosynthetic process"/>
    <property type="evidence" value="ECO:0007669"/>
    <property type="project" value="UniProtKB-UniRule"/>
</dbReference>
<dbReference type="GO" id="GO:0009089">
    <property type="term" value="P:lysine biosynthetic process via diaminopimelate"/>
    <property type="evidence" value="ECO:0007669"/>
    <property type="project" value="UniProtKB-UniRule"/>
</dbReference>
<dbReference type="CDD" id="cd02274">
    <property type="entry name" value="DHDPR_N"/>
    <property type="match status" value="1"/>
</dbReference>
<dbReference type="FunFam" id="3.30.360.10:FF:000009">
    <property type="entry name" value="4-hydroxy-tetrahydrodipicolinate reductase"/>
    <property type="match status" value="1"/>
</dbReference>
<dbReference type="Gene3D" id="3.30.360.10">
    <property type="entry name" value="Dihydrodipicolinate Reductase, domain 2"/>
    <property type="match status" value="1"/>
</dbReference>
<dbReference type="Gene3D" id="3.40.50.720">
    <property type="entry name" value="NAD(P)-binding Rossmann-like Domain"/>
    <property type="match status" value="1"/>
</dbReference>
<dbReference type="HAMAP" id="MF_00102">
    <property type="entry name" value="DapB"/>
    <property type="match status" value="1"/>
</dbReference>
<dbReference type="InterPro" id="IPR022663">
    <property type="entry name" value="DapB_C"/>
</dbReference>
<dbReference type="InterPro" id="IPR000846">
    <property type="entry name" value="DapB_N"/>
</dbReference>
<dbReference type="InterPro" id="IPR022664">
    <property type="entry name" value="DapB_N_CS"/>
</dbReference>
<dbReference type="InterPro" id="IPR023940">
    <property type="entry name" value="DHDPR_bac"/>
</dbReference>
<dbReference type="InterPro" id="IPR036291">
    <property type="entry name" value="NAD(P)-bd_dom_sf"/>
</dbReference>
<dbReference type="NCBIfam" id="TIGR00036">
    <property type="entry name" value="dapB"/>
    <property type="match status" value="1"/>
</dbReference>
<dbReference type="PANTHER" id="PTHR20836:SF0">
    <property type="entry name" value="4-HYDROXY-TETRAHYDRODIPICOLINATE REDUCTASE 1, CHLOROPLASTIC-RELATED"/>
    <property type="match status" value="1"/>
</dbReference>
<dbReference type="PANTHER" id="PTHR20836">
    <property type="entry name" value="DIHYDRODIPICOLINATE REDUCTASE"/>
    <property type="match status" value="1"/>
</dbReference>
<dbReference type="Pfam" id="PF05173">
    <property type="entry name" value="DapB_C"/>
    <property type="match status" value="1"/>
</dbReference>
<dbReference type="Pfam" id="PF01113">
    <property type="entry name" value="DapB_N"/>
    <property type="match status" value="1"/>
</dbReference>
<dbReference type="PIRSF" id="PIRSF000161">
    <property type="entry name" value="DHPR"/>
    <property type="match status" value="1"/>
</dbReference>
<dbReference type="SUPFAM" id="SSF55347">
    <property type="entry name" value="Glyceraldehyde-3-phosphate dehydrogenase-like, C-terminal domain"/>
    <property type="match status" value="1"/>
</dbReference>
<dbReference type="SUPFAM" id="SSF51735">
    <property type="entry name" value="NAD(P)-binding Rossmann-fold domains"/>
    <property type="match status" value="1"/>
</dbReference>
<dbReference type="PROSITE" id="PS01298">
    <property type="entry name" value="DAPB"/>
    <property type="match status" value="1"/>
</dbReference>
<sequence length="245" mass="25561">MRVGVLGAKGKVGSTMVAAVQAAEDLTLSAEVDAGDPLSLLTDGGTEAVIDFTHPDVVMGNLEFLVRNGIHAVVGTTGFTAERLAQVREWLADSPGTSVLVAPNFAIGAVLSMHFAKQAARFFDSAEVIELHHPHKADAPSGTATRTAKLIAEARKGLPPNPDATSTSLPGARGADVDGIPVHAVRLAGLVAHQEILFGTEGETLSIRHDSLDRTSFVPGVLLAVRRIREHPGLTVGLEPLLDLG</sequence>
<name>DAPB_MYCPA</name>
<accession>Q73VY3</accession>
<evidence type="ECO:0000255" key="1">
    <source>
        <dbReference type="HAMAP-Rule" id="MF_00102"/>
    </source>
</evidence>
<evidence type="ECO:0000305" key="2"/>
<organism>
    <name type="scientific">Mycolicibacterium paratuberculosis (strain ATCC BAA-968 / K-10)</name>
    <name type="common">Mycobacterium paratuberculosis</name>
    <dbReference type="NCBI Taxonomy" id="262316"/>
    <lineage>
        <taxon>Bacteria</taxon>
        <taxon>Bacillati</taxon>
        <taxon>Actinomycetota</taxon>
        <taxon>Actinomycetes</taxon>
        <taxon>Mycobacteriales</taxon>
        <taxon>Mycobacteriaceae</taxon>
        <taxon>Mycobacterium</taxon>
        <taxon>Mycobacterium avium complex (MAC)</taxon>
    </lineage>
</organism>
<feature type="chain" id="PRO_0000228363" description="4-hydroxy-tetrahydrodipicolinate reductase">
    <location>
        <begin position="1"/>
        <end position="245"/>
    </location>
</feature>
<feature type="active site" description="Proton donor/acceptor" evidence="1">
    <location>
        <position position="132"/>
    </location>
</feature>
<feature type="active site" description="Proton donor" evidence="1">
    <location>
        <position position="136"/>
    </location>
</feature>
<feature type="binding site" evidence="1">
    <location>
        <begin position="7"/>
        <end position="12"/>
    </location>
    <ligand>
        <name>NAD(+)</name>
        <dbReference type="ChEBI" id="CHEBI:57540"/>
    </ligand>
</feature>
<feature type="binding site" evidence="1">
    <location>
        <position position="33"/>
    </location>
    <ligand>
        <name>NAD(+)</name>
        <dbReference type="ChEBI" id="CHEBI:57540"/>
    </ligand>
</feature>
<feature type="binding site" evidence="1">
    <location>
        <begin position="75"/>
        <end position="77"/>
    </location>
    <ligand>
        <name>NAD(+)</name>
        <dbReference type="ChEBI" id="CHEBI:57540"/>
    </ligand>
</feature>
<feature type="binding site" evidence="1">
    <location>
        <begin position="102"/>
        <end position="105"/>
    </location>
    <ligand>
        <name>NAD(+)</name>
        <dbReference type="ChEBI" id="CHEBI:57540"/>
    </ligand>
</feature>
<feature type="binding site" evidence="1">
    <location>
        <position position="133"/>
    </location>
    <ligand>
        <name>(S)-2,3,4,5-tetrahydrodipicolinate</name>
        <dbReference type="ChEBI" id="CHEBI:16845"/>
    </ligand>
</feature>
<feature type="binding site" evidence="1">
    <location>
        <begin position="142"/>
        <end position="143"/>
    </location>
    <ligand>
        <name>(S)-2,3,4,5-tetrahydrodipicolinate</name>
        <dbReference type="ChEBI" id="CHEBI:16845"/>
    </ligand>
</feature>
<keyword id="KW-0028">Amino-acid biosynthesis</keyword>
<keyword id="KW-0963">Cytoplasm</keyword>
<keyword id="KW-0220">Diaminopimelate biosynthesis</keyword>
<keyword id="KW-0457">Lysine biosynthesis</keyword>
<keyword id="KW-0520">NAD</keyword>
<keyword id="KW-0521">NADP</keyword>
<keyword id="KW-0560">Oxidoreductase</keyword>
<keyword id="KW-1185">Reference proteome</keyword>
<comment type="function">
    <text evidence="1">Catalyzes the conversion of 4-hydroxy-tetrahydrodipicolinate (HTPA) to tetrahydrodipicolinate.</text>
</comment>
<comment type="catalytic activity">
    <reaction evidence="1">
        <text>(S)-2,3,4,5-tetrahydrodipicolinate + NAD(+) + H2O = (2S,4S)-4-hydroxy-2,3,4,5-tetrahydrodipicolinate + NADH + H(+)</text>
        <dbReference type="Rhea" id="RHEA:35323"/>
        <dbReference type="ChEBI" id="CHEBI:15377"/>
        <dbReference type="ChEBI" id="CHEBI:15378"/>
        <dbReference type="ChEBI" id="CHEBI:16845"/>
        <dbReference type="ChEBI" id="CHEBI:57540"/>
        <dbReference type="ChEBI" id="CHEBI:57945"/>
        <dbReference type="ChEBI" id="CHEBI:67139"/>
        <dbReference type="EC" id="1.17.1.8"/>
    </reaction>
</comment>
<comment type="catalytic activity">
    <reaction evidence="1">
        <text>(S)-2,3,4,5-tetrahydrodipicolinate + NADP(+) + H2O = (2S,4S)-4-hydroxy-2,3,4,5-tetrahydrodipicolinate + NADPH + H(+)</text>
        <dbReference type="Rhea" id="RHEA:35331"/>
        <dbReference type="ChEBI" id="CHEBI:15377"/>
        <dbReference type="ChEBI" id="CHEBI:15378"/>
        <dbReference type="ChEBI" id="CHEBI:16845"/>
        <dbReference type="ChEBI" id="CHEBI:57783"/>
        <dbReference type="ChEBI" id="CHEBI:58349"/>
        <dbReference type="ChEBI" id="CHEBI:67139"/>
        <dbReference type="EC" id="1.17.1.8"/>
    </reaction>
</comment>
<comment type="pathway">
    <text evidence="1">Amino-acid biosynthesis; L-lysine biosynthesis via DAP pathway; (S)-tetrahydrodipicolinate from L-aspartate: step 4/4.</text>
</comment>
<comment type="subcellular location">
    <subcellularLocation>
        <location evidence="1">Cytoplasm</location>
    </subcellularLocation>
</comment>
<comment type="similarity">
    <text evidence="1">Belongs to the DapB family.</text>
</comment>
<comment type="caution">
    <text evidence="2">Was originally thought to be a dihydrodipicolinate reductase (DHDPR), catalyzing the conversion of dihydrodipicolinate to tetrahydrodipicolinate. However, it was shown in E.coli that the substrate of the enzymatic reaction is not dihydrodipicolinate (DHDP) but in fact (2S,4S)-4-hydroxy-2,3,4,5-tetrahydrodipicolinic acid (HTPA), the product released by the DapA-catalyzed reaction.</text>
</comment>
<reference key="1">
    <citation type="journal article" date="2005" name="Proc. Natl. Acad. Sci. U.S.A.">
        <title>The complete genome sequence of Mycobacterium avium subspecies paratuberculosis.</title>
        <authorList>
            <person name="Li L."/>
            <person name="Bannantine J.P."/>
            <person name="Zhang Q."/>
            <person name="Amonsin A."/>
            <person name="May B.J."/>
            <person name="Alt D."/>
            <person name="Banerji N."/>
            <person name="Kanjilal S."/>
            <person name="Kapur V."/>
        </authorList>
    </citation>
    <scope>NUCLEOTIDE SEQUENCE [LARGE SCALE GENOMIC DNA]</scope>
    <source>
        <strain>ATCC BAA-968 / K-10</strain>
    </source>
</reference>
<gene>
    <name evidence="1" type="primary">dapB</name>
    <name type="ordered locus">MAP_2878c</name>
</gene>
<protein>
    <recommendedName>
        <fullName evidence="1">4-hydroxy-tetrahydrodipicolinate reductase</fullName>
        <shortName evidence="1">HTPA reductase</shortName>
        <ecNumber evidence="1">1.17.1.8</ecNumber>
    </recommendedName>
</protein>